<protein>
    <recommendedName>
        <fullName>Homeobox protein ceh-37</fullName>
    </recommendedName>
</protein>
<reference key="1">
    <citation type="journal article" date="1998" name="Science">
        <title>Genome sequence of the nematode C. elegans: a platform for investigating biology.</title>
        <authorList>
            <consortium name="The C. elegans sequencing consortium"/>
        </authorList>
    </citation>
    <scope>NUCLEOTIDE SEQUENCE [LARGE SCALE GENOMIC DNA]</scope>
    <source>
        <strain>Bristol N2</strain>
    </source>
</reference>
<reference key="2">
    <citation type="journal article" date="2003" name="Dev. Cell">
        <title>Otx/otd homeobox genes specify distinct sensory neuron identities in C. elegans.</title>
        <authorList>
            <person name="Lanjuin A."/>
            <person name="VanHoven M.K."/>
            <person name="Bargmann C.I."/>
            <person name="Thompson J.K."/>
            <person name="Sengupta P."/>
        </authorList>
    </citation>
    <scope>FUNCTION</scope>
    <scope>TISSUE SPECIFICITY</scope>
    <scope>DEVELOPMENTAL STAGE</scope>
</reference>
<reference key="3">
    <citation type="journal article" date="2003" name="J. Biol. Chem.">
        <title>Sequence-specific binding to telomeric DNA by CEH-37, a homeodomain protein in the nematode Caenorhabditis elegans.</title>
        <authorList>
            <person name="Kim S.H."/>
            <person name="Hwang S.B."/>
            <person name="Chung I.K."/>
            <person name="Lee J."/>
        </authorList>
    </citation>
    <scope>FUNCTION</scope>
    <scope>SUBCELLULAR LOCATION</scope>
</reference>
<name>HM37_CAEEL</name>
<organism>
    <name type="scientific">Caenorhabditis elegans</name>
    <dbReference type="NCBI Taxonomy" id="6239"/>
    <lineage>
        <taxon>Eukaryota</taxon>
        <taxon>Metazoa</taxon>
        <taxon>Ecdysozoa</taxon>
        <taxon>Nematoda</taxon>
        <taxon>Chromadorea</taxon>
        <taxon>Rhabditida</taxon>
        <taxon>Rhabditina</taxon>
        <taxon>Rhabditomorpha</taxon>
        <taxon>Rhabditoidea</taxon>
        <taxon>Rhabditidae</taxon>
        <taxon>Peloderinae</taxon>
        <taxon>Caenorhabditis</taxon>
    </lineage>
</organism>
<accession>Q93356</accession>
<accession>P90773</accession>
<dbReference type="EMBL" id="Z81046">
    <property type="protein sequence ID" value="CAB02825.1"/>
    <property type="molecule type" value="Genomic_DNA"/>
</dbReference>
<dbReference type="PIR" id="T19813">
    <property type="entry name" value="T19813"/>
</dbReference>
<dbReference type="RefSeq" id="NP_510366.1">
    <property type="nucleotide sequence ID" value="NM_077965.5"/>
</dbReference>
<dbReference type="PDB" id="2MGQ">
    <property type="method" value="NMR"/>
    <property type="chains" value="A=38-104"/>
</dbReference>
<dbReference type="PDBsum" id="2MGQ"/>
<dbReference type="BMRB" id="Q93356"/>
<dbReference type="SMR" id="Q93356"/>
<dbReference type="BioGRID" id="46429">
    <property type="interactions" value="1"/>
</dbReference>
<dbReference type="FunCoup" id="Q93356">
    <property type="interactions" value="16"/>
</dbReference>
<dbReference type="IntAct" id="Q93356">
    <property type="interactions" value="1"/>
</dbReference>
<dbReference type="STRING" id="6239.C37E2.5a.1"/>
<dbReference type="PaxDb" id="6239-C37E2.5"/>
<dbReference type="EnsemblMetazoa" id="C37E2.5a.1">
    <property type="protein sequence ID" value="C37E2.5a.1"/>
    <property type="gene ID" value="WBGene00000458"/>
</dbReference>
<dbReference type="GeneID" id="181530"/>
<dbReference type="KEGG" id="cel:CELE_C37E2.5"/>
<dbReference type="UCSC" id="C37E2.5">
    <property type="organism name" value="c. elegans"/>
</dbReference>
<dbReference type="AGR" id="WB:WBGene00000458"/>
<dbReference type="CTD" id="181530"/>
<dbReference type="WormBase" id="C37E2.5a">
    <property type="protein sequence ID" value="CE08624"/>
    <property type="gene ID" value="WBGene00000458"/>
    <property type="gene designation" value="ceh-37"/>
</dbReference>
<dbReference type="eggNOG" id="KOG2251">
    <property type="taxonomic scope" value="Eukaryota"/>
</dbReference>
<dbReference type="HOGENOM" id="CLU_984296_0_0_1"/>
<dbReference type="InParanoid" id="Q93356"/>
<dbReference type="OMA" id="PYNAAMI"/>
<dbReference type="OrthoDB" id="6159439at2759"/>
<dbReference type="PhylomeDB" id="Q93356"/>
<dbReference type="EvolutionaryTrace" id="Q93356"/>
<dbReference type="PRO" id="PR:Q93356"/>
<dbReference type="Proteomes" id="UP000001940">
    <property type="component" value="Chromosome X"/>
</dbReference>
<dbReference type="Bgee" id="WBGene00000458">
    <property type="expression patterns" value="Expressed in pharyngeal muscle cell (C elegans) and 3 other cell types or tissues"/>
</dbReference>
<dbReference type="ExpressionAtlas" id="Q93356">
    <property type="expression patterns" value="baseline and differential"/>
</dbReference>
<dbReference type="GO" id="GO:0000781">
    <property type="term" value="C:chromosome, telomeric region"/>
    <property type="evidence" value="ECO:0000314"/>
    <property type="project" value="UniProtKB"/>
</dbReference>
<dbReference type="GO" id="GO:0005634">
    <property type="term" value="C:nucleus"/>
    <property type="evidence" value="ECO:0000318"/>
    <property type="project" value="GO_Central"/>
</dbReference>
<dbReference type="GO" id="GO:0008301">
    <property type="term" value="F:DNA binding, bending"/>
    <property type="evidence" value="ECO:0000314"/>
    <property type="project" value="UniProtKB"/>
</dbReference>
<dbReference type="GO" id="GO:0000981">
    <property type="term" value="F:DNA-binding transcription factor activity, RNA polymerase II-specific"/>
    <property type="evidence" value="ECO:0000318"/>
    <property type="project" value="GO_Central"/>
</dbReference>
<dbReference type="GO" id="GO:0003691">
    <property type="term" value="F:double-stranded telomeric DNA binding"/>
    <property type="evidence" value="ECO:0000314"/>
    <property type="project" value="WormBase"/>
</dbReference>
<dbReference type="GO" id="GO:0000978">
    <property type="term" value="F:RNA polymerase II cis-regulatory region sequence-specific DNA binding"/>
    <property type="evidence" value="ECO:0000318"/>
    <property type="project" value="GO_Central"/>
</dbReference>
<dbReference type="GO" id="GO:0042162">
    <property type="term" value="F:telomeric DNA binding"/>
    <property type="evidence" value="ECO:0000314"/>
    <property type="project" value="UniProtKB"/>
</dbReference>
<dbReference type="GO" id="GO:0048665">
    <property type="term" value="P:neuron fate specification"/>
    <property type="evidence" value="ECO:0000315"/>
    <property type="project" value="WormBase"/>
</dbReference>
<dbReference type="GO" id="GO:0042048">
    <property type="term" value="P:olfactory behavior"/>
    <property type="evidence" value="ECO:0000315"/>
    <property type="project" value="UniProtKB"/>
</dbReference>
<dbReference type="GO" id="GO:0006355">
    <property type="term" value="P:regulation of DNA-templated transcription"/>
    <property type="evidence" value="ECO:0000315"/>
    <property type="project" value="UniProtKB"/>
</dbReference>
<dbReference type="GO" id="GO:0006357">
    <property type="term" value="P:regulation of transcription by RNA polymerase II"/>
    <property type="evidence" value="ECO:0000315"/>
    <property type="project" value="WormBase"/>
</dbReference>
<dbReference type="GO" id="GO:0016233">
    <property type="term" value="P:telomere capping"/>
    <property type="evidence" value="ECO:0000303"/>
    <property type="project" value="UniProtKB"/>
</dbReference>
<dbReference type="GO" id="GO:0000723">
    <property type="term" value="P:telomere maintenance"/>
    <property type="evidence" value="ECO:0000304"/>
    <property type="project" value="WormBase"/>
</dbReference>
<dbReference type="GO" id="GO:0032200">
    <property type="term" value="P:telomere organization"/>
    <property type="evidence" value="ECO:0000303"/>
    <property type="project" value="UniProtKB"/>
</dbReference>
<dbReference type="CDD" id="cd00086">
    <property type="entry name" value="homeodomain"/>
    <property type="match status" value="1"/>
</dbReference>
<dbReference type="FunFam" id="1.10.10.60:FF:000679">
    <property type="entry name" value="Homeobox protein aristaless"/>
    <property type="match status" value="1"/>
</dbReference>
<dbReference type="Gene3D" id="1.10.10.60">
    <property type="entry name" value="Homeodomain-like"/>
    <property type="match status" value="1"/>
</dbReference>
<dbReference type="InterPro" id="IPR001356">
    <property type="entry name" value="HD"/>
</dbReference>
<dbReference type="InterPro" id="IPR017970">
    <property type="entry name" value="Homeobox_CS"/>
</dbReference>
<dbReference type="InterPro" id="IPR009057">
    <property type="entry name" value="Homeodomain-like_sf"/>
</dbReference>
<dbReference type="PANTHER" id="PTHR45793">
    <property type="entry name" value="HOMEOBOX PROTEIN"/>
    <property type="match status" value="1"/>
</dbReference>
<dbReference type="PANTHER" id="PTHR45793:SF27">
    <property type="entry name" value="HOMEOBOX PROTEIN CEH-37"/>
    <property type="match status" value="1"/>
</dbReference>
<dbReference type="Pfam" id="PF00046">
    <property type="entry name" value="Homeodomain"/>
    <property type="match status" value="1"/>
</dbReference>
<dbReference type="SMART" id="SM00389">
    <property type="entry name" value="HOX"/>
    <property type="match status" value="1"/>
</dbReference>
<dbReference type="SUPFAM" id="SSF46689">
    <property type="entry name" value="Homeodomain-like"/>
    <property type="match status" value="1"/>
</dbReference>
<dbReference type="PROSITE" id="PS00027">
    <property type="entry name" value="HOMEOBOX_1"/>
    <property type="match status" value="1"/>
</dbReference>
<dbReference type="PROSITE" id="PS50071">
    <property type="entry name" value="HOMEOBOX_2"/>
    <property type="match status" value="1"/>
</dbReference>
<sequence>MTSYSYFTIPSTATTGFNYPVQPMTMFSGAPYNAAMIPRKNRRERTTYSRQQLEILETLFNETQYPDVFARERVADQIRLQESRIQVWFKNRRAKYRLQEKQKPKRSNEKSQEHKSEDQQQTDVLDGEPLKGGSPGYQPQIKSELESCDGAVASGKLGTPKSISPVETTASTTSSNTSAAELQWNGDHKILGFGKNETTTSAAVSPTADNASTPSSSSSITATSSLPTTSSSLSVYNYPAIYPQWGLDYSTYANPQYAQFSHNPYAGTPFWYSNGNNL</sequence>
<comment type="function">
    <text evidence="3 4">Binds to the telomeric DNA sequence 5'-TTAGGC-3', requiring at least 1.5 repeats for binding. Bends telomeric DNA and may provide chromosome stability. Also required for development of AWB olfactory neurons.</text>
</comment>
<comment type="subcellular location">
    <subcellularLocation>
        <location evidence="1 3">Nucleus</location>
    </subcellularLocation>
    <subcellularLocation>
        <location evidence="3">Chromosome</location>
        <location evidence="3">Telomere</location>
    </subcellularLocation>
    <text>Binds to telomeres.</text>
</comment>
<comment type="tissue specificity">
    <text evidence="4">Broadly expressed during early embryonic development. During later embryonic stages, expression is detected in AWB olfactory sensory neurons but is absent from there by early L1 larval stages. Expression in non-neuronal cells including the excretory cell and intestine is maintained through adult stages.</text>
</comment>
<comment type="developmental stage">
    <text evidence="4">Expression starts during embryogenesis and continues into adulthood.</text>
</comment>
<comment type="domain">
    <text>The N-terminal and homeobox regions are together sufficient to bind telomeric DNA.</text>
</comment>
<comment type="domain">
    <text>The C-terminal region is required for bending of telomeric DNA.</text>
</comment>
<comment type="similarity">
    <text evidence="5">Belongs to the paired homeobox family.</text>
</comment>
<feature type="chain" id="PRO_0000049002" description="Homeobox protein ceh-37">
    <location>
        <begin position="1"/>
        <end position="278"/>
    </location>
</feature>
<feature type="DNA-binding region" description="Homeobox" evidence="1">
    <location>
        <begin position="41"/>
        <end position="100"/>
    </location>
</feature>
<feature type="region of interest" description="Disordered" evidence="2">
    <location>
        <begin position="98"/>
        <end position="182"/>
    </location>
</feature>
<feature type="region of interest" description="Disordered" evidence="2">
    <location>
        <begin position="200"/>
        <end position="228"/>
    </location>
</feature>
<feature type="compositionally biased region" description="Basic and acidic residues" evidence="2">
    <location>
        <begin position="98"/>
        <end position="118"/>
    </location>
</feature>
<feature type="compositionally biased region" description="Low complexity" evidence="2">
    <location>
        <begin position="168"/>
        <end position="180"/>
    </location>
</feature>
<feature type="compositionally biased region" description="Low complexity" evidence="2">
    <location>
        <begin position="205"/>
        <end position="228"/>
    </location>
</feature>
<feature type="strand" evidence="6">
    <location>
        <begin position="40"/>
        <end position="42"/>
    </location>
</feature>
<feature type="strand" evidence="6">
    <location>
        <begin position="45"/>
        <end position="48"/>
    </location>
</feature>
<feature type="helix" evidence="6">
    <location>
        <begin position="51"/>
        <end position="62"/>
    </location>
</feature>
<feature type="helix" evidence="6">
    <location>
        <begin position="68"/>
        <end position="78"/>
    </location>
</feature>
<feature type="turn" evidence="6">
    <location>
        <begin position="82"/>
        <end position="84"/>
    </location>
</feature>
<feature type="helix" evidence="6">
    <location>
        <begin position="85"/>
        <end position="88"/>
    </location>
</feature>
<feature type="helix" evidence="6">
    <location>
        <begin position="90"/>
        <end position="102"/>
    </location>
</feature>
<keyword id="KW-0002">3D-structure</keyword>
<keyword id="KW-0158">Chromosome</keyword>
<keyword id="KW-0217">Developmental protein</keyword>
<keyword id="KW-0238">DNA-binding</keyword>
<keyword id="KW-0371">Homeobox</keyword>
<keyword id="KW-0539">Nucleus</keyword>
<keyword id="KW-1185">Reference proteome</keyword>
<keyword id="KW-0779">Telomere</keyword>
<proteinExistence type="evidence at protein level"/>
<evidence type="ECO:0000255" key="1">
    <source>
        <dbReference type="PROSITE-ProRule" id="PRU00108"/>
    </source>
</evidence>
<evidence type="ECO:0000256" key="2">
    <source>
        <dbReference type="SAM" id="MobiDB-lite"/>
    </source>
</evidence>
<evidence type="ECO:0000269" key="3">
    <source>
    </source>
</evidence>
<evidence type="ECO:0000269" key="4">
    <source>
    </source>
</evidence>
<evidence type="ECO:0000305" key="5"/>
<evidence type="ECO:0007829" key="6">
    <source>
        <dbReference type="PDB" id="2MGQ"/>
    </source>
</evidence>
<gene>
    <name type="primary">ceh-37</name>
    <name type="ORF">C37E2.5</name>
</gene>